<accession>P25718</accession>
<accession>Q2M7N4</accession>
<feature type="signal peptide" evidence="2">
    <location>
        <begin position="1"/>
        <end position="17"/>
    </location>
</feature>
<feature type="chain" id="PRO_0000001339" description="Periplasmic alpha-amylase">
    <location>
        <begin position="18"/>
        <end position="676"/>
    </location>
</feature>
<feature type="active site" description="Nucleophile" evidence="1">
    <location>
        <position position="460"/>
    </location>
</feature>
<feature type="active site" description="Proton donor" evidence="1">
    <location>
        <position position="503"/>
    </location>
</feature>
<feature type="binding site" evidence="1">
    <location>
        <position position="314"/>
    </location>
    <ligand>
        <name>Ca(2+)</name>
        <dbReference type="ChEBI" id="CHEBI:29108"/>
    </ligand>
</feature>
<feature type="binding site" evidence="1">
    <location>
        <position position="464"/>
    </location>
    <ligand>
        <name>Ca(2+)</name>
        <dbReference type="ChEBI" id="CHEBI:29108"/>
    </ligand>
</feature>
<feature type="site" description="Transition state stabilizer" evidence="1">
    <location>
        <position position="565"/>
    </location>
</feature>
<feature type="disulfide bond" evidence="3">
    <location>
        <begin position="57"/>
        <end position="75"/>
    </location>
</feature>
<feature type="disulfide bond" evidence="3">
    <location>
        <begin position="121"/>
        <end position="537"/>
    </location>
</feature>
<feature type="strand" evidence="5">
    <location>
        <begin position="129"/>
        <end position="132"/>
    </location>
</feature>
<feature type="turn" evidence="5">
    <location>
        <begin position="134"/>
        <end position="136"/>
    </location>
</feature>
<feature type="strand" evidence="5">
    <location>
        <begin position="142"/>
        <end position="145"/>
    </location>
</feature>
<feature type="turn" evidence="5">
    <location>
        <begin position="146"/>
        <end position="148"/>
    </location>
</feature>
<feature type="strand" evidence="5">
    <location>
        <begin position="151"/>
        <end position="153"/>
    </location>
</feature>
<feature type="strand" evidence="5">
    <location>
        <begin position="155"/>
        <end position="161"/>
    </location>
</feature>
<feature type="helix" evidence="5">
    <location>
        <begin position="165"/>
        <end position="167"/>
    </location>
</feature>
<feature type="strand" evidence="5">
    <location>
        <begin position="170"/>
        <end position="175"/>
    </location>
</feature>
<feature type="helix" evidence="5">
    <location>
        <begin position="186"/>
        <end position="188"/>
    </location>
</feature>
<feature type="strand" evidence="5">
    <location>
        <begin position="190"/>
        <end position="194"/>
    </location>
</feature>
<feature type="helix" evidence="5">
    <location>
        <begin position="196"/>
        <end position="198"/>
    </location>
</feature>
<feature type="helix" evidence="5">
    <location>
        <begin position="204"/>
        <end position="206"/>
    </location>
</feature>
<feature type="helix" evidence="5">
    <location>
        <begin position="209"/>
        <end position="211"/>
    </location>
</feature>
<feature type="strand" evidence="5">
    <location>
        <begin position="220"/>
        <end position="222"/>
    </location>
</feature>
<feature type="helix" evidence="5">
    <location>
        <begin position="228"/>
        <end position="233"/>
    </location>
</feature>
<feature type="helix" evidence="5">
    <location>
        <begin position="235"/>
        <end position="240"/>
    </location>
</feature>
<feature type="strand" evidence="5">
    <location>
        <begin position="245"/>
        <end position="248"/>
    </location>
</feature>
<feature type="strand" evidence="5">
    <location>
        <begin position="252"/>
        <end position="254"/>
    </location>
</feature>
<feature type="strand" evidence="5">
    <location>
        <begin position="259"/>
        <end position="261"/>
    </location>
</feature>
<feature type="turn" evidence="5">
    <location>
        <begin position="262"/>
        <end position="265"/>
    </location>
</feature>
<feature type="strand" evidence="5">
    <location>
        <begin position="267"/>
        <end position="269"/>
    </location>
</feature>
<feature type="strand" evidence="5">
    <location>
        <begin position="276"/>
        <end position="283"/>
    </location>
</feature>
<feature type="turn" evidence="5">
    <location>
        <begin position="285"/>
        <end position="287"/>
    </location>
</feature>
<feature type="helix" evidence="5">
    <location>
        <begin position="290"/>
        <end position="301"/>
    </location>
</feature>
<feature type="turn" evidence="5">
    <location>
        <begin position="302"/>
        <end position="304"/>
    </location>
</feature>
<feature type="strand" evidence="5">
    <location>
        <begin position="306"/>
        <end position="311"/>
    </location>
</feature>
<feature type="helix" evidence="5">
    <location>
        <begin position="321"/>
        <end position="327"/>
    </location>
</feature>
<feature type="helix" evidence="5">
    <location>
        <begin position="337"/>
        <end position="342"/>
    </location>
</feature>
<feature type="helix" evidence="5">
    <location>
        <begin position="347"/>
        <end position="349"/>
    </location>
</feature>
<feature type="helix" evidence="5">
    <location>
        <begin position="360"/>
        <end position="364"/>
    </location>
</feature>
<feature type="helix" evidence="5">
    <location>
        <begin position="370"/>
        <end position="373"/>
    </location>
</feature>
<feature type="turn" evidence="5">
    <location>
        <begin position="379"/>
        <end position="381"/>
    </location>
</feature>
<feature type="turn" evidence="5">
    <location>
        <begin position="396"/>
        <end position="398"/>
    </location>
</feature>
<feature type="helix" evidence="5">
    <location>
        <begin position="419"/>
        <end position="423"/>
    </location>
</feature>
<feature type="helix" evidence="5">
    <location>
        <begin position="437"/>
        <end position="452"/>
    </location>
</feature>
<feature type="strand" evidence="5">
    <location>
        <begin position="456"/>
        <end position="459"/>
    </location>
</feature>
<feature type="helix" evidence="5">
    <location>
        <begin position="462"/>
        <end position="464"/>
    </location>
</feature>
<feature type="helix" evidence="5">
    <location>
        <begin position="467"/>
        <end position="487"/>
    </location>
</feature>
<feature type="turn" evidence="5">
    <location>
        <begin position="489"/>
        <end position="491"/>
    </location>
</feature>
<feature type="strand" evidence="5">
    <location>
        <begin position="499"/>
        <end position="502"/>
    </location>
</feature>
<feature type="helix" evidence="5">
    <location>
        <begin position="513"/>
        <end position="517"/>
    </location>
</feature>
<feature type="strand" evidence="5">
    <location>
        <begin position="520"/>
        <end position="524"/>
    </location>
</feature>
<feature type="helix" evidence="5">
    <location>
        <begin position="527"/>
        <end position="533"/>
    </location>
</feature>
<feature type="turn" evidence="5">
    <location>
        <begin position="534"/>
        <end position="536"/>
    </location>
</feature>
<feature type="helix" evidence="5">
    <location>
        <begin position="538"/>
        <end position="541"/>
    </location>
</feature>
<feature type="helix" evidence="5">
    <location>
        <begin position="542"/>
        <end position="551"/>
    </location>
</feature>
<feature type="strand" evidence="5">
    <location>
        <begin position="556"/>
        <end position="561"/>
    </location>
</feature>
<feature type="strand" evidence="5">
    <location>
        <begin position="564"/>
        <end position="566"/>
    </location>
</feature>
<feature type="turn" evidence="5">
    <location>
        <begin position="571"/>
        <end position="574"/>
    </location>
</feature>
<feature type="helix" evidence="5">
    <location>
        <begin position="575"/>
        <end position="581"/>
    </location>
</feature>
<feature type="strand" evidence="5">
    <location>
        <begin position="583"/>
        <end position="590"/>
    </location>
</feature>
<feature type="helix" evidence="5">
    <location>
        <begin position="593"/>
        <end position="595"/>
    </location>
</feature>
<feature type="helix" evidence="5">
    <location>
        <begin position="608"/>
        <end position="611"/>
    </location>
</feature>
<feature type="helix" evidence="5">
    <location>
        <begin position="616"/>
        <end position="620"/>
    </location>
</feature>
<feature type="turn" evidence="5">
    <location>
        <begin position="621"/>
        <end position="623"/>
    </location>
</feature>
<feature type="helix" evidence="5">
    <location>
        <begin position="624"/>
        <end position="639"/>
    </location>
</feature>
<feature type="helix" evidence="5">
    <location>
        <begin position="642"/>
        <end position="645"/>
    </location>
</feature>
<feature type="strand" evidence="5">
    <location>
        <begin position="646"/>
        <end position="650"/>
    </location>
</feature>
<feature type="strand" evidence="5">
    <location>
        <begin position="654"/>
        <end position="663"/>
    </location>
</feature>
<feature type="strand" evidence="5">
    <location>
        <begin position="666"/>
        <end position="672"/>
    </location>
</feature>
<name>AMY1_ECOLI</name>
<proteinExistence type="evidence at protein level"/>
<protein>
    <recommendedName>
        <fullName>Periplasmic alpha-amylase</fullName>
        <ecNumber>3.2.1.1</ecNumber>
    </recommendedName>
    <alternativeName>
        <fullName>1,4-alpha-D-glucan glucanohydrolase</fullName>
    </alternativeName>
</protein>
<dbReference type="EC" id="3.2.1.1"/>
<dbReference type="EMBL" id="X58994">
    <property type="protein sequence ID" value="CAA41740.1"/>
    <property type="molecule type" value="Genomic_DNA"/>
</dbReference>
<dbReference type="EMBL" id="U00039">
    <property type="protein sequence ID" value="AAB18548.1"/>
    <property type="molecule type" value="Genomic_DNA"/>
</dbReference>
<dbReference type="EMBL" id="U00096">
    <property type="protein sequence ID" value="AAC76595.1"/>
    <property type="molecule type" value="Genomic_DNA"/>
</dbReference>
<dbReference type="EMBL" id="AP009048">
    <property type="protein sequence ID" value="BAE77722.1"/>
    <property type="molecule type" value="Genomic_DNA"/>
</dbReference>
<dbReference type="PIR" id="S23807">
    <property type="entry name" value="S23807"/>
</dbReference>
<dbReference type="RefSeq" id="NP_418028.1">
    <property type="nucleotide sequence ID" value="NC_000913.3"/>
</dbReference>
<dbReference type="RefSeq" id="WP_000761225.1">
    <property type="nucleotide sequence ID" value="NZ_LN832404.1"/>
</dbReference>
<dbReference type="PDB" id="8IM8">
    <property type="method" value="X-ray"/>
    <property type="resolution" value="2.70 A"/>
    <property type="chains" value="A/B/C/D=1-676"/>
</dbReference>
<dbReference type="PDBsum" id="8IM8"/>
<dbReference type="SMR" id="P25718"/>
<dbReference type="BioGRID" id="4261712">
    <property type="interactions" value="12"/>
</dbReference>
<dbReference type="DIP" id="DIP-10148N"/>
<dbReference type="FunCoup" id="P25718">
    <property type="interactions" value="60"/>
</dbReference>
<dbReference type="IntAct" id="P25718">
    <property type="interactions" value="3"/>
</dbReference>
<dbReference type="STRING" id="511145.b3571"/>
<dbReference type="CAZy" id="GH13">
    <property type="family name" value="Glycoside Hydrolase Family 13"/>
</dbReference>
<dbReference type="jPOST" id="P25718"/>
<dbReference type="PaxDb" id="511145-b3571"/>
<dbReference type="EnsemblBacteria" id="AAC76595">
    <property type="protein sequence ID" value="AAC76595"/>
    <property type="gene ID" value="b3571"/>
</dbReference>
<dbReference type="GeneID" id="948088"/>
<dbReference type="KEGG" id="ecj:JW3543"/>
<dbReference type="KEGG" id="eco:b3571"/>
<dbReference type="KEGG" id="ecoc:C3026_19360"/>
<dbReference type="PATRIC" id="fig|1411691.4.peg.3141"/>
<dbReference type="EchoBASE" id="EB1292"/>
<dbReference type="eggNOG" id="COG0366">
    <property type="taxonomic scope" value="Bacteria"/>
</dbReference>
<dbReference type="HOGENOM" id="CLU_022115_1_0_6"/>
<dbReference type="InParanoid" id="P25718"/>
<dbReference type="OMA" id="DKVMVVW"/>
<dbReference type="OrthoDB" id="9761577at2"/>
<dbReference type="PhylomeDB" id="P25718"/>
<dbReference type="BioCyc" id="EcoCyc:ALPHA-AMYL-PERI-MONOMER"/>
<dbReference type="BioCyc" id="MetaCyc:ALPHA-AMYL-PERI-MONOMER"/>
<dbReference type="PRO" id="PR:P25718"/>
<dbReference type="Proteomes" id="UP000000625">
    <property type="component" value="Chromosome"/>
</dbReference>
<dbReference type="GO" id="GO:0030288">
    <property type="term" value="C:outer membrane-bounded periplasmic space"/>
    <property type="evidence" value="ECO:0000314"/>
    <property type="project" value="EcoCyc"/>
</dbReference>
<dbReference type="GO" id="GO:0042597">
    <property type="term" value="C:periplasmic space"/>
    <property type="evidence" value="ECO:0000314"/>
    <property type="project" value="EcoliWiki"/>
</dbReference>
<dbReference type="GO" id="GO:0004556">
    <property type="term" value="F:alpha-amylase activity"/>
    <property type="evidence" value="ECO:0000314"/>
    <property type="project" value="EcoliWiki"/>
</dbReference>
<dbReference type="GO" id="GO:0005509">
    <property type="term" value="F:calcium ion binding"/>
    <property type="evidence" value="ECO:0000314"/>
    <property type="project" value="EcoCyc"/>
</dbReference>
<dbReference type="GO" id="GO:0030980">
    <property type="term" value="P:alpha-glucan catabolic process"/>
    <property type="evidence" value="ECO:0000315"/>
    <property type="project" value="EcoCyc"/>
</dbReference>
<dbReference type="GO" id="GO:0009313">
    <property type="term" value="P:oligosaccharide catabolic process"/>
    <property type="evidence" value="ECO:0007669"/>
    <property type="project" value="InterPro"/>
</dbReference>
<dbReference type="FunFam" id="3.20.20.80:FF:000079">
    <property type="entry name" value="Alpha-amylase"/>
    <property type="match status" value="1"/>
</dbReference>
<dbReference type="FunFam" id="3.20.20.80:FF:000089">
    <property type="entry name" value="Periplasmic alpha-amylase"/>
    <property type="match status" value="1"/>
</dbReference>
<dbReference type="Gene3D" id="3.20.20.80">
    <property type="entry name" value="Glycosidases"/>
    <property type="match status" value="2"/>
</dbReference>
<dbReference type="InterPro" id="IPR014635">
    <property type="entry name" value="A_amylase_MalS"/>
</dbReference>
<dbReference type="InterPro" id="IPR006047">
    <property type="entry name" value="Glyco_hydro_13_cat_dom"/>
</dbReference>
<dbReference type="InterPro" id="IPR017853">
    <property type="entry name" value="Glycoside_hydrolase_SF"/>
</dbReference>
<dbReference type="NCBIfam" id="NF007052">
    <property type="entry name" value="PRK09505.1-2"/>
    <property type="match status" value="1"/>
</dbReference>
<dbReference type="NCBIfam" id="NF007054">
    <property type="entry name" value="PRK09505.1-4"/>
    <property type="match status" value="1"/>
</dbReference>
<dbReference type="NCBIfam" id="NF007059">
    <property type="entry name" value="PRK09505.2-4"/>
    <property type="match status" value="1"/>
</dbReference>
<dbReference type="NCBIfam" id="NF007060">
    <property type="entry name" value="PRK09505.2-5"/>
    <property type="match status" value="1"/>
</dbReference>
<dbReference type="PANTHER" id="PTHR10357">
    <property type="entry name" value="ALPHA-AMYLASE FAMILY MEMBER"/>
    <property type="match status" value="1"/>
</dbReference>
<dbReference type="PANTHER" id="PTHR10357:SF209">
    <property type="entry name" value="PERIPLASMIC ALPHA-AMYLASE"/>
    <property type="match status" value="1"/>
</dbReference>
<dbReference type="Pfam" id="PF00128">
    <property type="entry name" value="Alpha-amylase"/>
    <property type="match status" value="2"/>
</dbReference>
<dbReference type="PIRSF" id="PIRSF036917">
    <property type="entry name" value="Alph_amls_MalS"/>
    <property type="match status" value="1"/>
</dbReference>
<dbReference type="SMART" id="SM00642">
    <property type="entry name" value="Aamy"/>
    <property type="match status" value="1"/>
</dbReference>
<dbReference type="SUPFAM" id="SSF51445">
    <property type="entry name" value="(Trans)glycosidases"/>
    <property type="match status" value="1"/>
</dbReference>
<comment type="function">
    <text>Since only maltooligosaccharides up to a chain length of 6 glucose units are actively transported through the cytoplasmic membrane via the membrane-bound complex of three proteins, MalF, MalG, and MalK, longer maltooligosaccharides must first be degraded by the periplasmic alpha-amylase, the MalS protein.</text>
</comment>
<comment type="catalytic activity">
    <reaction>
        <text>Endohydrolysis of (1-&gt;4)-alpha-D-glucosidic linkages in polysaccharides containing three or more (1-&gt;4)-alpha-linked D-glucose units.</text>
        <dbReference type="EC" id="3.2.1.1"/>
    </reaction>
</comment>
<comment type="cofactor">
    <cofactor evidence="1">
        <name>Ca(2+)</name>
        <dbReference type="ChEBI" id="CHEBI:29108"/>
    </cofactor>
    <text evidence="1">Binds 1 Ca(2+) ion per subunit.</text>
</comment>
<comment type="subunit">
    <text>Monomer.</text>
</comment>
<comment type="subcellular location">
    <subcellularLocation>
        <location>Periplasm</location>
    </subcellularLocation>
</comment>
<comment type="induction">
    <text>Under the regulatory control of the MalT protein.</text>
</comment>
<comment type="similarity">
    <text evidence="4">Belongs to the glycosyl hydrolase 13 family.</text>
</comment>
<organism>
    <name type="scientific">Escherichia coli (strain K12)</name>
    <dbReference type="NCBI Taxonomy" id="83333"/>
    <lineage>
        <taxon>Bacteria</taxon>
        <taxon>Pseudomonadati</taxon>
        <taxon>Pseudomonadota</taxon>
        <taxon>Gammaproteobacteria</taxon>
        <taxon>Enterobacterales</taxon>
        <taxon>Enterobacteriaceae</taxon>
        <taxon>Escherichia</taxon>
    </lineage>
</organism>
<sequence>MKLAACFLTLLPGFAVAASWTSPGFPAFSEQGTGTFVSHAQLPKGTRPLTLNFDQQCWQPADAIKLNQMLSLQPCSNTPPQWRLFRDGEYTLQIDTRSGTPTLMISIQNAAEPVASLVRECPKWDGLPLTVDVSATFPEGAAVRDYYSQQIAIVKNGQIMLQPAATSNGLLLLERAETDTSAPFDWHNATVYFVLTDRFENGDPSNDQSYGRHKDGMAEIGTFHGGDLRGLTNKLDYLQQLGVNALWISAPFEQIHGWVGGGTKGDFPHYAYHGYYTQDWTNLDANMGNEADLRTLVDSAHQRGIRILFDVVMNHTGYATLADMQEYQFGALYLSGDEVKKSLGERWSDWKPAAGQTWHSFNDYINFSDKTGWDKWWGKNWIRTDIGDYDNPGFDDLTMSLAFLPDIKTESTTASGLPVFYKNKMDTHAKAIDGYTPRDYLTHWLSQWVRDYGIDGFRVDTAKHVELPAWQQLKTEASAALREWKKANPDKALDDKPFWMTGEAWGHGVMQSDYYRHGFDAMINFDYQEQAAKAVDCLAQMDTTWQQMAEKLQGFNVLSYLSSHDTRLFREGGDKAAELLLLAPGAVQIFYGDESSRPFGPTGSDPLQGTRSDMNWQDVSGKSAASVAHWQKISQFRARHPAIGAGKQTTLLLKQGYGFVREHGDDKVLVVWAGQQ</sequence>
<evidence type="ECO:0000250" key="1"/>
<evidence type="ECO:0000269" key="2">
    <source>
    </source>
</evidence>
<evidence type="ECO:0000269" key="3">
    <source>
    </source>
</evidence>
<evidence type="ECO:0000305" key="4"/>
<evidence type="ECO:0007829" key="5">
    <source>
        <dbReference type="PDB" id="8IM8"/>
    </source>
</evidence>
<reference key="1">
    <citation type="journal article" date="1992" name="J. Biol. Chem.">
        <title>Molecular characterization of the MalT-dependent periplasmic alpha-amylase of Escherichia coli encoded by malS.</title>
        <authorList>
            <person name="Schneider E."/>
            <person name="Freundlieb S."/>
            <person name="Tapio S."/>
            <person name="Boos W."/>
        </authorList>
    </citation>
    <scope>NUCLEOTIDE SEQUENCE [GENOMIC DNA]</scope>
    <scope>PROTEIN SEQUENCE OF 18-43</scope>
    <source>
        <strain>K12</strain>
    </source>
</reference>
<reference key="2">
    <citation type="journal article" date="1994" name="Nucleic Acids Res.">
        <title>Analysis of the Escherichia coli genome. V. DNA sequence of the region from 76.0 to 81.5 minutes.</title>
        <authorList>
            <person name="Sofia H.J."/>
            <person name="Burland V."/>
            <person name="Daniels D.L."/>
            <person name="Plunkett G. III"/>
            <person name="Blattner F.R."/>
        </authorList>
    </citation>
    <scope>NUCLEOTIDE SEQUENCE [LARGE SCALE GENOMIC DNA]</scope>
    <source>
        <strain>K12 / MG1655 / ATCC 47076</strain>
    </source>
</reference>
<reference key="3">
    <citation type="journal article" date="1997" name="Science">
        <title>The complete genome sequence of Escherichia coli K-12.</title>
        <authorList>
            <person name="Blattner F.R."/>
            <person name="Plunkett G. III"/>
            <person name="Bloch C.A."/>
            <person name="Perna N.T."/>
            <person name="Burland V."/>
            <person name="Riley M."/>
            <person name="Collado-Vides J."/>
            <person name="Glasner J.D."/>
            <person name="Rode C.K."/>
            <person name="Mayhew G.F."/>
            <person name="Gregor J."/>
            <person name="Davis N.W."/>
            <person name="Kirkpatrick H.A."/>
            <person name="Goeden M.A."/>
            <person name="Rose D.J."/>
            <person name="Mau B."/>
            <person name="Shao Y."/>
        </authorList>
    </citation>
    <scope>NUCLEOTIDE SEQUENCE [LARGE SCALE GENOMIC DNA]</scope>
    <source>
        <strain>K12 / MG1655 / ATCC 47076</strain>
    </source>
</reference>
<reference key="4">
    <citation type="journal article" date="2006" name="Mol. Syst. Biol.">
        <title>Highly accurate genome sequences of Escherichia coli K-12 strains MG1655 and W3110.</title>
        <authorList>
            <person name="Hayashi K."/>
            <person name="Morooka N."/>
            <person name="Yamamoto Y."/>
            <person name="Fujita K."/>
            <person name="Isono K."/>
            <person name="Choi S."/>
            <person name="Ohtsubo E."/>
            <person name="Baba T."/>
            <person name="Wanner B.L."/>
            <person name="Mori H."/>
            <person name="Horiuchi T."/>
        </authorList>
    </citation>
    <scope>NUCLEOTIDE SEQUENCE [LARGE SCALE GENOMIC DNA]</scope>
    <source>
        <strain>K12 / W3110 / ATCC 27325 / DSM 5911</strain>
    </source>
</reference>
<reference key="5">
    <citation type="journal article" date="1997" name="J. Biol. Chem.">
        <title>Biochemical characterization and mass spectrometric disulfide bond mapping of periplasmic alpha-amylase MalS of Escherichia coli.</title>
        <authorList>
            <person name="Spiess C."/>
            <person name="Happersberger H.P."/>
            <person name="Glocker M.O."/>
            <person name="Spiess E."/>
            <person name="Rippe K."/>
            <person name="Ehrmann M."/>
        </authorList>
    </citation>
    <scope>DISULFIDE BONDS</scope>
</reference>
<keyword id="KW-0002">3D-structure</keyword>
<keyword id="KW-0106">Calcium</keyword>
<keyword id="KW-0119">Carbohydrate metabolism</keyword>
<keyword id="KW-0903">Direct protein sequencing</keyword>
<keyword id="KW-1015">Disulfide bond</keyword>
<keyword id="KW-0326">Glycosidase</keyword>
<keyword id="KW-0378">Hydrolase</keyword>
<keyword id="KW-0479">Metal-binding</keyword>
<keyword id="KW-0574">Periplasm</keyword>
<keyword id="KW-1185">Reference proteome</keyword>
<keyword id="KW-0732">Signal</keyword>
<gene>
    <name type="primary">malS</name>
    <name type="ordered locus">b3571</name>
    <name type="ordered locus">JW3543</name>
</gene>